<evidence type="ECO:0000255" key="1">
    <source>
        <dbReference type="HAMAP-Rule" id="MF_01358"/>
    </source>
</evidence>
<accession>Q5HSL5</accession>
<feature type="chain" id="PRO_0000371846" description="NADH-quinone oxidoreductase subunit D">
    <location>
        <begin position="1"/>
        <end position="408"/>
    </location>
</feature>
<name>NUOD_CAMJR</name>
<dbReference type="EC" id="7.1.1.-" evidence="1"/>
<dbReference type="EMBL" id="CP000025">
    <property type="protein sequence ID" value="AAW36172.1"/>
    <property type="molecule type" value="Genomic_DNA"/>
</dbReference>
<dbReference type="RefSeq" id="WP_002864417.1">
    <property type="nucleotide sequence ID" value="NC_003912.7"/>
</dbReference>
<dbReference type="SMR" id="Q5HSL5"/>
<dbReference type="KEGG" id="cjr:CJE1747"/>
<dbReference type="HOGENOM" id="CLU_015134_1_2_7"/>
<dbReference type="GO" id="GO:0005886">
    <property type="term" value="C:plasma membrane"/>
    <property type="evidence" value="ECO:0007669"/>
    <property type="project" value="UniProtKB-SubCell"/>
</dbReference>
<dbReference type="GO" id="GO:0051287">
    <property type="term" value="F:NAD binding"/>
    <property type="evidence" value="ECO:0007669"/>
    <property type="project" value="InterPro"/>
</dbReference>
<dbReference type="GO" id="GO:0050136">
    <property type="term" value="F:NADH:ubiquinone reductase (non-electrogenic) activity"/>
    <property type="evidence" value="ECO:0007669"/>
    <property type="project" value="UniProtKB-UniRule"/>
</dbReference>
<dbReference type="GO" id="GO:0048038">
    <property type="term" value="F:quinone binding"/>
    <property type="evidence" value="ECO:0007669"/>
    <property type="project" value="UniProtKB-KW"/>
</dbReference>
<dbReference type="Gene3D" id="1.10.645.10">
    <property type="entry name" value="Cytochrome-c3 Hydrogenase, chain B"/>
    <property type="match status" value="1"/>
</dbReference>
<dbReference type="HAMAP" id="MF_01358">
    <property type="entry name" value="NDH1_NuoD"/>
    <property type="match status" value="1"/>
</dbReference>
<dbReference type="InterPro" id="IPR001135">
    <property type="entry name" value="NADH_Q_OxRdtase_suD"/>
</dbReference>
<dbReference type="InterPro" id="IPR022885">
    <property type="entry name" value="NDH1_su_D/H"/>
</dbReference>
<dbReference type="InterPro" id="IPR029014">
    <property type="entry name" value="NiFe-Hase_large"/>
</dbReference>
<dbReference type="NCBIfam" id="TIGR01962">
    <property type="entry name" value="NuoD"/>
    <property type="match status" value="1"/>
</dbReference>
<dbReference type="NCBIfam" id="NF004739">
    <property type="entry name" value="PRK06075.1"/>
    <property type="match status" value="1"/>
</dbReference>
<dbReference type="PANTHER" id="PTHR11993:SF10">
    <property type="entry name" value="NADH DEHYDROGENASE [UBIQUINONE] IRON-SULFUR PROTEIN 2, MITOCHONDRIAL"/>
    <property type="match status" value="1"/>
</dbReference>
<dbReference type="PANTHER" id="PTHR11993">
    <property type="entry name" value="NADH-UBIQUINONE OXIDOREDUCTASE 49 KDA SUBUNIT"/>
    <property type="match status" value="1"/>
</dbReference>
<dbReference type="Pfam" id="PF00346">
    <property type="entry name" value="Complex1_49kDa"/>
    <property type="match status" value="1"/>
</dbReference>
<dbReference type="SUPFAM" id="SSF56762">
    <property type="entry name" value="HydB/Nqo4-like"/>
    <property type="match status" value="1"/>
</dbReference>
<keyword id="KW-0997">Cell inner membrane</keyword>
<keyword id="KW-1003">Cell membrane</keyword>
<keyword id="KW-0472">Membrane</keyword>
<keyword id="KW-0520">NAD</keyword>
<keyword id="KW-0874">Quinone</keyword>
<keyword id="KW-1278">Translocase</keyword>
<keyword id="KW-0813">Transport</keyword>
<keyword id="KW-0830">Ubiquinone</keyword>
<sequence length="408" mass="46937">MQIPSKLKPYYENIAFEQEDSKMIINLGPQHPSAHGNLRLILELDGEQVVKARPCIGYMHRGMEKMAENMIYQEFIPTTDRMDYIAASANNYAYCAAVEKLCGLEIPRRAAVIRMILLELNRITSHLLWLATHALDIGAMSVFLYCFREREYVLDLIEKYCGARLTHSSMRIGGVMLDLPENYLEEMLAFCDKFPNDLKDYEDLLDDNRIWRLRTENVGVVTKEQALNWGCTGVMLRGSGIKYDIRKEEPYLLYNEVEFGVPYATQGDSYARYKVYMQEFRESLKILRQCAMLYKDTSPEILATHPEYVSASKEQILTQNYSLMQHFVLITQGLKPPKGEVYVPTESPKGELGFFIHSDGTGRPYRLKARTPSYWHCAFFEEMLVGTYLADVVAIMGNVNIVLGEIDR</sequence>
<organism>
    <name type="scientific">Campylobacter jejuni (strain RM1221)</name>
    <dbReference type="NCBI Taxonomy" id="195099"/>
    <lineage>
        <taxon>Bacteria</taxon>
        <taxon>Pseudomonadati</taxon>
        <taxon>Campylobacterota</taxon>
        <taxon>Epsilonproteobacteria</taxon>
        <taxon>Campylobacterales</taxon>
        <taxon>Campylobacteraceae</taxon>
        <taxon>Campylobacter</taxon>
    </lineage>
</organism>
<reference key="1">
    <citation type="journal article" date="2005" name="PLoS Biol.">
        <title>Major structural differences and novel potential virulence mechanisms from the genomes of multiple Campylobacter species.</title>
        <authorList>
            <person name="Fouts D.E."/>
            <person name="Mongodin E.F."/>
            <person name="Mandrell R.E."/>
            <person name="Miller W.G."/>
            <person name="Rasko D.A."/>
            <person name="Ravel J."/>
            <person name="Brinkac L.M."/>
            <person name="DeBoy R.T."/>
            <person name="Parker C.T."/>
            <person name="Daugherty S.C."/>
            <person name="Dodson R.J."/>
            <person name="Durkin A.S."/>
            <person name="Madupu R."/>
            <person name="Sullivan S.A."/>
            <person name="Shetty J.U."/>
            <person name="Ayodeji M.A."/>
            <person name="Shvartsbeyn A."/>
            <person name="Schatz M.C."/>
            <person name="Badger J.H."/>
            <person name="Fraser C.M."/>
            <person name="Nelson K.E."/>
        </authorList>
    </citation>
    <scope>NUCLEOTIDE SEQUENCE [LARGE SCALE GENOMIC DNA]</scope>
    <source>
        <strain>RM1221</strain>
    </source>
</reference>
<comment type="function">
    <text evidence="1">NDH-1 shuttles electrons from NADH, via FMN and iron-sulfur (Fe-S) centers, to quinones in the respiratory chain. The immediate electron acceptor for the enzyme in this species is believed to be ubiquinone. Couples the redox reaction to proton translocation (for every two electrons transferred, four hydrogen ions are translocated across the cytoplasmic membrane), and thus conserves the redox energy in a proton gradient.</text>
</comment>
<comment type="catalytic activity">
    <reaction evidence="1">
        <text>a quinone + NADH + 5 H(+)(in) = a quinol + NAD(+) + 4 H(+)(out)</text>
        <dbReference type="Rhea" id="RHEA:57888"/>
        <dbReference type="ChEBI" id="CHEBI:15378"/>
        <dbReference type="ChEBI" id="CHEBI:24646"/>
        <dbReference type="ChEBI" id="CHEBI:57540"/>
        <dbReference type="ChEBI" id="CHEBI:57945"/>
        <dbReference type="ChEBI" id="CHEBI:132124"/>
    </reaction>
</comment>
<comment type="subunit">
    <text evidence="1">NDH-1 is composed of 14 different subunits. Subunits NuoB, C, D, E, F, and G constitute the peripheral sector of the complex.</text>
</comment>
<comment type="subcellular location">
    <subcellularLocation>
        <location evidence="1">Cell inner membrane</location>
        <topology evidence="1">Peripheral membrane protein</topology>
        <orientation evidence="1">Cytoplasmic side</orientation>
    </subcellularLocation>
</comment>
<comment type="similarity">
    <text evidence="1">Belongs to the complex I 49 kDa subunit family.</text>
</comment>
<proteinExistence type="inferred from homology"/>
<gene>
    <name evidence="1" type="primary">nuoD</name>
    <name type="ordered locus">CJE1747</name>
</gene>
<protein>
    <recommendedName>
        <fullName evidence="1">NADH-quinone oxidoreductase subunit D</fullName>
        <ecNumber evidence="1">7.1.1.-</ecNumber>
    </recommendedName>
    <alternativeName>
        <fullName evidence="1">NADH dehydrogenase I subunit D</fullName>
    </alternativeName>
    <alternativeName>
        <fullName evidence="1">NDH-1 subunit D</fullName>
    </alternativeName>
</protein>